<evidence type="ECO:0000255" key="1">
    <source>
        <dbReference type="HAMAP-Rule" id="MF_00015"/>
    </source>
</evidence>
<evidence type="ECO:0000256" key="2">
    <source>
        <dbReference type="SAM" id="MobiDB-lite"/>
    </source>
</evidence>
<evidence type="ECO:0000305" key="3"/>
<dbReference type="EC" id="3.4.21.88" evidence="1"/>
<dbReference type="EMBL" id="BA000036">
    <property type="protein sequence ID" value="BAB99323.1"/>
    <property type="molecule type" value="Genomic_DNA"/>
</dbReference>
<dbReference type="EMBL" id="BX927153">
    <property type="protein sequence ID" value="CAF20271.1"/>
    <property type="status" value="ALT_INIT"/>
    <property type="molecule type" value="Genomic_DNA"/>
</dbReference>
<dbReference type="RefSeq" id="NP_601136.1">
    <property type="nucleotide sequence ID" value="NC_003450.3"/>
</dbReference>
<dbReference type="SMR" id="Q8NP86"/>
<dbReference type="STRING" id="196627.cg2114"/>
<dbReference type="MEROPS" id="S24.001"/>
<dbReference type="KEGG" id="cgb:cg2114"/>
<dbReference type="KEGG" id="cgl:Cgl1930"/>
<dbReference type="PATRIC" id="fig|196627.13.peg.1868"/>
<dbReference type="eggNOG" id="COG1974">
    <property type="taxonomic scope" value="Bacteria"/>
</dbReference>
<dbReference type="HOGENOM" id="CLU_066192_45_0_11"/>
<dbReference type="OrthoDB" id="9802364at2"/>
<dbReference type="BioCyc" id="CORYNE:G18NG-11522-MONOMER"/>
<dbReference type="Proteomes" id="UP000000582">
    <property type="component" value="Chromosome"/>
</dbReference>
<dbReference type="Proteomes" id="UP000001009">
    <property type="component" value="Chromosome"/>
</dbReference>
<dbReference type="GO" id="GO:0003677">
    <property type="term" value="F:DNA binding"/>
    <property type="evidence" value="ECO:0007669"/>
    <property type="project" value="UniProtKB-UniRule"/>
</dbReference>
<dbReference type="GO" id="GO:0004252">
    <property type="term" value="F:serine-type endopeptidase activity"/>
    <property type="evidence" value="ECO:0007669"/>
    <property type="project" value="UniProtKB-UniRule"/>
</dbReference>
<dbReference type="GO" id="GO:0006281">
    <property type="term" value="P:DNA repair"/>
    <property type="evidence" value="ECO:0007669"/>
    <property type="project" value="UniProtKB-UniRule"/>
</dbReference>
<dbReference type="GO" id="GO:0006260">
    <property type="term" value="P:DNA replication"/>
    <property type="evidence" value="ECO:0007669"/>
    <property type="project" value="UniProtKB-UniRule"/>
</dbReference>
<dbReference type="GO" id="GO:0045892">
    <property type="term" value="P:negative regulation of DNA-templated transcription"/>
    <property type="evidence" value="ECO:0007669"/>
    <property type="project" value="UniProtKB-UniRule"/>
</dbReference>
<dbReference type="GO" id="GO:0006508">
    <property type="term" value="P:proteolysis"/>
    <property type="evidence" value="ECO:0007669"/>
    <property type="project" value="InterPro"/>
</dbReference>
<dbReference type="GO" id="GO:0009432">
    <property type="term" value="P:SOS response"/>
    <property type="evidence" value="ECO:0007669"/>
    <property type="project" value="UniProtKB-UniRule"/>
</dbReference>
<dbReference type="CDD" id="cd06529">
    <property type="entry name" value="S24_LexA-like"/>
    <property type="match status" value="1"/>
</dbReference>
<dbReference type="FunFam" id="1.10.10.10:FF:000009">
    <property type="entry name" value="LexA repressor"/>
    <property type="match status" value="1"/>
</dbReference>
<dbReference type="FunFam" id="2.10.109.10:FF:000001">
    <property type="entry name" value="LexA repressor"/>
    <property type="match status" value="1"/>
</dbReference>
<dbReference type="Gene3D" id="2.10.109.10">
    <property type="entry name" value="Umud Fragment, subunit A"/>
    <property type="match status" value="1"/>
</dbReference>
<dbReference type="Gene3D" id="1.10.10.10">
    <property type="entry name" value="Winged helix-like DNA-binding domain superfamily/Winged helix DNA-binding domain"/>
    <property type="match status" value="1"/>
</dbReference>
<dbReference type="HAMAP" id="MF_00015">
    <property type="entry name" value="LexA"/>
    <property type="match status" value="1"/>
</dbReference>
<dbReference type="InterPro" id="IPR006200">
    <property type="entry name" value="LexA"/>
</dbReference>
<dbReference type="InterPro" id="IPR039418">
    <property type="entry name" value="LexA-like"/>
</dbReference>
<dbReference type="InterPro" id="IPR036286">
    <property type="entry name" value="LexA/Signal_pep-like_sf"/>
</dbReference>
<dbReference type="InterPro" id="IPR006199">
    <property type="entry name" value="LexA_DNA-bd_dom"/>
</dbReference>
<dbReference type="InterPro" id="IPR050077">
    <property type="entry name" value="LexA_repressor"/>
</dbReference>
<dbReference type="InterPro" id="IPR006197">
    <property type="entry name" value="Peptidase_S24_LexA"/>
</dbReference>
<dbReference type="InterPro" id="IPR015927">
    <property type="entry name" value="Peptidase_S24_S26A/B/C"/>
</dbReference>
<dbReference type="InterPro" id="IPR036388">
    <property type="entry name" value="WH-like_DNA-bd_sf"/>
</dbReference>
<dbReference type="InterPro" id="IPR036390">
    <property type="entry name" value="WH_DNA-bd_sf"/>
</dbReference>
<dbReference type="NCBIfam" id="TIGR00498">
    <property type="entry name" value="lexA"/>
    <property type="match status" value="1"/>
</dbReference>
<dbReference type="PANTHER" id="PTHR33516">
    <property type="entry name" value="LEXA REPRESSOR"/>
    <property type="match status" value="1"/>
</dbReference>
<dbReference type="PANTHER" id="PTHR33516:SF2">
    <property type="entry name" value="LEXA REPRESSOR-RELATED"/>
    <property type="match status" value="1"/>
</dbReference>
<dbReference type="Pfam" id="PF01726">
    <property type="entry name" value="LexA_DNA_bind"/>
    <property type="match status" value="1"/>
</dbReference>
<dbReference type="Pfam" id="PF00717">
    <property type="entry name" value="Peptidase_S24"/>
    <property type="match status" value="1"/>
</dbReference>
<dbReference type="PRINTS" id="PR00726">
    <property type="entry name" value="LEXASERPTASE"/>
</dbReference>
<dbReference type="SUPFAM" id="SSF51306">
    <property type="entry name" value="LexA/Signal peptidase"/>
    <property type="match status" value="1"/>
</dbReference>
<dbReference type="SUPFAM" id="SSF46785">
    <property type="entry name" value="Winged helix' DNA-binding domain"/>
    <property type="match status" value="1"/>
</dbReference>
<accession>Q8NP86</accession>
<feature type="chain" id="PRO_0000170029" description="LexA repressor">
    <location>
        <begin position="1"/>
        <end position="232"/>
    </location>
</feature>
<feature type="DNA-binding region" description="H-T-H motif" evidence="1">
    <location>
        <begin position="35"/>
        <end position="55"/>
    </location>
</feature>
<feature type="region of interest" description="Disordered" evidence="2">
    <location>
        <begin position="61"/>
        <end position="104"/>
    </location>
</feature>
<feature type="compositionally biased region" description="Basic and acidic residues" evidence="2">
    <location>
        <begin position="61"/>
        <end position="85"/>
    </location>
</feature>
<feature type="compositionally biased region" description="Low complexity" evidence="2">
    <location>
        <begin position="86"/>
        <end position="99"/>
    </location>
</feature>
<feature type="active site" description="For autocatalytic cleavage activity" evidence="1">
    <location>
        <position position="156"/>
    </location>
</feature>
<feature type="active site" description="For autocatalytic cleavage activity" evidence="1">
    <location>
        <position position="193"/>
    </location>
</feature>
<feature type="site" description="Cleavage; by autolysis" evidence="1">
    <location>
        <begin position="121"/>
        <end position="122"/>
    </location>
</feature>
<sequence>MPNGKPDPASLSDRQRRILEVIRDAVVLRGYPPSIREIGDAAGLQSTSSVAYQLKELEKKGFLRRDPNKPRAVDVRHLPETESRSSKAATQAKSKAPQAGVHDPELAGQTSFVPVVGKIAAGSPITAEQNIEEYYPLPAEIVGDGDLFMLQVVGESMRDAGILTGDWVVVRSQPVAEQGEFVAAMIDGEATVKEFHKDSSGIWLLPHNDTFAPIPAENAEIMGKVVSVMRKL</sequence>
<gene>
    <name evidence="1" type="primary">lexA</name>
    <name type="ordered locus">Cgl1930</name>
    <name type="ordered locus">cg2114</name>
</gene>
<reference key="1">
    <citation type="journal article" date="2003" name="Appl. Microbiol. Biotechnol.">
        <title>The Corynebacterium glutamicum genome: features and impacts on biotechnological processes.</title>
        <authorList>
            <person name="Ikeda M."/>
            <person name="Nakagawa S."/>
        </authorList>
    </citation>
    <scope>NUCLEOTIDE SEQUENCE [LARGE SCALE GENOMIC DNA]</scope>
    <source>
        <strain>ATCC 13032 / DSM 20300 / JCM 1318 / BCRC 11384 / CCUG 27702 / LMG 3730 / NBRC 12168 / NCIMB 10025 / NRRL B-2784 / 534</strain>
    </source>
</reference>
<reference key="2">
    <citation type="journal article" date="2003" name="J. Biotechnol.">
        <title>The complete Corynebacterium glutamicum ATCC 13032 genome sequence and its impact on the production of L-aspartate-derived amino acids and vitamins.</title>
        <authorList>
            <person name="Kalinowski J."/>
            <person name="Bathe B."/>
            <person name="Bartels D."/>
            <person name="Bischoff N."/>
            <person name="Bott M."/>
            <person name="Burkovski A."/>
            <person name="Dusch N."/>
            <person name="Eggeling L."/>
            <person name="Eikmanns B.J."/>
            <person name="Gaigalat L."/>
            <person name="Goesmann A."/>
            <person name="Hartmann M."/>
            <person name="Huthmacher K."/>
            <person name="Kraemer R."/>
            <person name="Linke B."/>
            <person name="McHardy A.C."/>
            <person name="Meyer F."/>
            <person name="Moeckel B."/>
            <person name="Pfefferle W."/>
            <person name="Puehler A."/>
            <person name="Rey D.A."/>
            <person name="Rueckert C."/>
            <person name="Rupp O."/>
            <person name="Sahm H."/>
            <person name="Wendisch V.F."/>
            <person name="Wiegraebe I."/>
            <person name="Tauch A."/>
        </authorList>
    </citation>
    <scope>NUCLEOTIDE SEQUENCE [LARGE SCALE GENOMIC DNA]</scope>
    <source>
        <strain>ATCC 13032 / DSM 20300 / JCM 1318 / BCRC 11384 / CCUG 27702 / LMG 3730 / NBRC 12168 / NCIMB 10025 / NRRL B-2784 / 534</strain>
    </source>
</reference>
<name>LEXA_CORGL</name>
<proteinExistence type="inferred from homology"/>
<keyword id="KW-0068">Autocatalytic cleavage</keyword>
<keyword id="KW-0227">DNA damage</keyword>
<keyword id="KW-0234">DNA repair</keyword>
<keyword id="KW-0235">DNA replication</keyword>
<keyword id="KW-0238">DNA-binding</keyword>
<keyword id="KW-0378">Hydrolase</keyword>
<keyword id="KW-1185">Reference proteome</keyword>
<keyword id="KW-0678">Repressor</keyword>
<keyword id="KW-0742">SOS response</keyword>
<keyword id="KW-0804">Transcription</keyword>
<keyword id="KW-0805">Transcription regulation</keyword>
<comment type="function">
    <text evidence="1">Represses a number of genes involved in the response to DNA damage (SOS response), including recA and lexA. In the presence of single-stranded DNA, RecA interacts with LexA causing an autocatalytic cleavage which disrupts the DNA-binding part of LexA, leading to derepression of the SOS regulon and eventually DNA repair.</text>
</comment>
<comment type="catalytic activity">
    <reaction evidence="1">
        <text>Hydrolysis of Ala-|-Gly bond in repressor LexA.</text>
        <dbReference type="EC" id="3.4.21.88"/>
    </reaction>
</comment>
<comment type="subunit">
    <text evidence="1">Homodimer.</text>
</comment>
<comment type="similarity">
    <text evidence="1">Belongs to the peptidase S24 family.</text>
</comment>
<comment type="sequence caution" evidence="3">
    <conflict type="erroneous initiation">
        <sequence resource="EMBL-CDS" id="CAF20271"/>
    </conflict>
</comment>
<protein>
    <recommendedName>
        <fullName evidence="1">LexA repressor</fullName>
        <ecNumber evidence="1">3.4.21.88</ecNumber>
    </recommendedName>
</protein>
<organism>
    <name type="scientific">Corynebacterium glutamicum (strain ATCC 13032 / DSM 20300 / JCM 1318 / BCRC 11384 / CCUG 27702 / LMG 3730 / NBRC 12168 / NCIMB 10025 / NRRL B-2784 / 534)</name>
    <dbReference type="NCBI Taxonomy" id="196627"/>
    <lineage>
        <taxon>Bacteria</taxon>
        <taxon>Bacillati</taxon>
        <taxon>Actinomycetota</taxon>
        <taxon>Actinomycetes</taxon>
        <taxon>Mycobacteriales</taxon>
        <taxon>Corynebacteriaceae</taxon>
        <taxon>Corynebacterium</taxon>
    </lineage>
</organism>